<accession>Q12TC0</accession>
<organism>
    <name type="scientific">Shewanella denitrificans (strain OS217 / ATCC BAA-1090 / DSM 15013)</name>
    <dbReference type="NCBI Taxonomy" id="318161"/>
    <lineage>
        <taxon>Bacteria</taxon>
        <taxon>Pseudomonadati</taxon>
        <taxon>Pseudomonadota</taxon>
        <taxon>Gammaproteobacteria</taxon>
        <taxon>Alteromonadales</taxon>
        <taxon>Shewanellaceae</taxon>
        <taxon>Shewanella</taxon>
    </lineage>
</organism>
<feature type="chain" id="PRO_1000047485" description="Glycine--tRNA ligase alpha subunit">
    <location>
        <begin position="1"/>
        <end position="301"/>
    </location>
</feature>
<reference key="1">
    <citation type="submission" date="2006-03" db="EMBL/GenBank/DDBJ databases">
        <title>Complete sequence of Shewanella denitrificans OS217.</title>
        <authorList>
            <consortium name="US DOE Joint Genome Institute"/>
            <person name="Copeland A."/>
            <person name="Lucas S."/>
            <person name="Lapidus A."/>
            <person name="Barry K."/>
            <person name="Detter J.C."/>
            <person name="Glavina del Rio T."/>
            <person name="Hammon N."/>
            <person name="Israni S."/>
            <person name="Dalin E."/>
            <person name="Tice H."/>
            <person name="Pitluck S."/>
            <person name="Brettin T."/>
            <person name="Bruce D."/>
            <person name="Han C."/>
            <person name="Tapia R."/>
            <person name="Gilna P."/>
            <person name="Kiss H."/>
            <person name="Schmutz J."/>
            <person name="Larimer F."/>
            <person name="Land M."/>
            <person name="Hauser L."/>
            <person name="Kyrpides N."/>
            <person name="Lykidis A."/>
            <person name="Richardson P."/>
        </authorList>
    </citation>
    <scope>NUCLEOTIDE SEQUENCE [LARGE SCALE GENOMIC DNA]</scope>
    <source>
        <strain>OS217 / ATCC BAA-1090 / DSM 15013</strain>
    </source>
</reference>
<name>SYGA_SHEDO</name>
<keyword id="KW-0030">Aminoacyl-tRNA synthetase</keyword>
<keyword id="KW-0067">ATP-binding</keyword>
<keyword id="KW-0963">Cytoplasm</keyword>
<keyword id="KW-0436">Ligase</keyword>
<keyword id="KW-0547">Nucleotide-binding</keyword>
<keyword id="KW-0648">Protein biosynthesis</keyword>
<keyword id="KW-1185">Reference proteome</keyword>
<proteinExistence type="inferred from homology"/>
<gene>
    <name evidence="1" type="primary">glyQ</name>
    <name type="ordered locus">Sden_0009</name>
</gene>
<sequence>MTMKHDVKTFQGFILTLQEYWAQQGCAIVQPLDMEVGAGTFHPQTFLRSLGPEPMSSAYVQPSRRPTDGRYGENPNRLQHYYQFQVVLKPSPDNIQELYLGSLQALGIDTQVHDIRFVEDNWESPTLGAWGLGWEVWLNGMEVTQFTYFQQVGGIECSPVTGEITYGLERLAMYIQEVDSVYDLVWTDGPMGRVTYGDIFHQNEVEQSTYNFEHADVDFMFTLFDQCEKMCQHLLSLDKPLPLPAYEQVMKASHAFNLLDARHAISVTERQRYILRVRAMSKGVAESYYQAREALGFPLCK</sequence>
<comment type="catalytic activity">
    <reaction evidence="1">
        <text>tRNA(Gly) + glycine + ATP = glycyl-tRNA(Gly) + AMP + diphosphate</text>
        <dbReference type="Rhea" id="RHEA:16013"/>
        <dbReference type="Rhea" id="RHEA-COMP:9664"/>
        <dbReference type="Rhea" id="RHEA-COMP:9683"/>
        <dbReference type="ChEBI" id="CHEBI:30616"/>
        <dbReference type="ChEBI" id="CHEBI:33019"/>
        <dbReference type="ChEBI" id="CHEBI:57305"/>
        <dbReference type="ChEBI" id="CHEBI:78442"/>
        <dbReference type="ChEBI" id="CHEBI:78522"/>
        <dbReference type="ChEBI" id="CHEBI:456215"/>
        <dbReference type="EC" id="6.1.1.14"/>
    </reaction>
</comment>
<comment type="subunit">
    <text evidence="1">Tetramer of two alpha and two beta subunits.</text>
</comment>
<comment type="subcellular location">
    <subcellularLocation>
        <location evidence="1">Cytoplasm</location>
    </subcellularLocation>
</comment>
<comment type="similarity">
    <text evidence="1">Belongs to the class-II aminoacyl-tRNA synthetase family.</text>
</comment>
<dbReference type="EC" id="6.1.1.14" evidence="1"/>
<dbReference type="EMBL" id="CP000302">
    <property type="protein sequence ID" value="ABE53306.1"/>
    <property type="molecule type" value="Genomic_DNA"/>
</dbReference>
<dbReference type="RefSeq" id="WP_011494475.1">
    <property type="nucleotide sequence ID" value="NC_007954.1"/>
</dbReference>
<dbReference type="SMR" id="Q12TC0"/>
<dbReference type="STRING" id="318161.Sden_0009"/>
<dbReference type="KEGG" id="sdn:Sden_0009"/>
<dbReference type="eggNOG" id="COG0752">
    <property type="taxonomic scope" value="Bacteria"/>
</dbReference>
<dbReference type="HOGENOM" id="CLU_057066_1_0_6"/>
<dbReference type="OrthoDB" id="9802183at2"/>
<dbReference type="Proteomes" id="UP000001982">
    <property type="component" value="Chromosome"/>
</dbReference>
<dbReference type="GO" id="GO:0005829">
    <property type="term" value="C:cytosol"/>
    <property type="evidence" value="ECO:0007669"/>
    <property type="project" value="TreeGrafter"/>
</dbReference>
<dbReference type="GO" id="GO:0005524">
    <property type="term" value="F:ATP binding"/>
    <property type="evidence" value="ECO:0007669"/>
    <property type="project" value="UniProtKB-UniRule"/>
</dbReference>
<dbReference type="GO" id="GO:0004820">
    <property type="term" value="F:glycine-tRNA ligase activity"/>
    <property type="evidence" value="ECO:0007669"/>
    <property type="project" value="UniProtKB-UniRule"/>
</dbReference>
<dbReference type="GO" id="GO:0006426">
    <property type="term" value="P:glycyl-tRNA aminoacylation"/>
    <property type="evidence" value="ECO:0007669"/>
    <property type="project" value="UniProtKB-UniRule"/>
</dbReference>
<dbReference type="CDD" id="cd00733">
    <property type="entry name" value="GlyRS_alpha_core"/>
    <property type="match status" value="1"/>
</dbReference>
<dbReference type="FunFam" id="3.30.930.10:FF:000006">
    <property type="entry name" value="Glycine--tRNA ligase alpha subunit"/>
    <property type="match status" value="1"/>
</dbReference>
<dbReference type="Gene3D" id="3.30.930.10">
    <property type="entry name" value="Bira Bifunctional Protein, Domain 2"/>
    <property type="match status" value="1"/>
</dbReference>
<dbReference type="Gene3D" id="1.20.58.180">
    <property type="entry name" value="Class II aaRS and biotin synthetases, domain 2"/>
    <property type="match status" value="1"/>
</dbReference>
<dbReference type="HAMAP" id="MF_00254">
    <property type="entry name" value="Gly_tRNA_synth_alpha"/>
    <property type="match status" value="1"/>
</dbReference>
<dbReference type="InterPro" id="IPR045864">
    <property type="entry name" value="aa-tRNA-synth_II/BPL/LPL"/>
</dbReference>
<dbReference type="InterPro" id="IPR006194">
    <property type="entry name" value="Gly-tRNA-synth_heterodimer"/>
</dbReference>
<dbReference type="InterPro" id="IPR002310">
    <property type="entry name" value="Gly-tRNA_ligase_asu"/>
</dbReference>
<dbReference type="NCBIfam" id="TIGR00388">
    <property type="entry name" value="glyQ"/>
    <property type="match status" value="1"/>
</dbReference>
<dbReference type="NCBIfam" id="NF006827">
    <property type="entry name" value="PRK09348.1"/>
    <property type="match status" value="1"/>
</dbReference>
<dbReference type="PANTHER" id="PTHR30075:SF2">
    <property type="entry name" value="GLYCINE--TRNA LIGASE, CHLOROPLASTIC_MITOCHONDRIAL 2"/>
    <property type="match status" value="1"/>
</dbReference>
<dbReference type="PANTHER" id="PTHR30075">
    <property type="entry name" value="GLYCYL-TRNA SYNTHETASE"/>
    <property type="match status" value="1"/>
</dbReference>
<dbReference type="Pfam" id="PF02091">
    <property type="entry name" value="tRNA-synt_2e"/>
    <property type="match status" value="1"/>
</dbReference>
<dbReference type="PRINTS" id="PR01044">
    <property type="entry name" value="TRNASYNTHGA"/>
</dbReference>
<dbReference type="SUPFAM" id="SSF55681">
    <property type="entry name" value="Class II aaRS and biotin synthetases"/>
    <property type="match status" value="1"/>
</dbReference>
<dbReference type="PROSITE" id="PS50861">
    <property type="entry name" value="AA_TRNA_LIGASE_II_GLYAB"/>
    <property type="match status" value="1"/>
</dbReference>
<evidence type="ECO:0000255" key="1">
    <source>
        <dbReference type="HAMAP-Rule" id="MF_00254"/>
    </source>
</evidence>
<protein>
    <recommendedName>
        <fullName evidence="1">Glycine--tRNA ligase alpha subunit</fullName>
        <ecNumber evidence="1">6.1.1.14</ecNumber>
    </recommendedName>
    <alternativeName>
        <fullName evidence="1">Glycyl-tRNA synthetase alpha subunit</fullName>
        <shortName evidence="1">GlyRS</shortName>
    </alternativeName>
</protein>